<feature type="signal peptide" evidence="2">
    <location>
        <begin position="1"/>
        <end position="42"/>
    </location>
</feature>
<feature type="chain" id="PRO_0000324638" description="Protocadherin Fat 4">
    <location>
        <begin position="43"/>
        <end position="4981"/>
    </location>
</feature>
<feature type="topological domain" description="Extracellular" evidence="2">
    <location>
        <begin position="43"/>
        <end position="4505"/>
    </location>
</feature>
<feature type="transmembrane region" description="Helical" evidence="2">
    <location>
        <begin position="4506"/>
        <end position="4526"/>
    </location>
</feature>
<feature type="topological domain" description="Cytoplasmic" evidence="2">
    <location>
        <begin position="4527"/>
        <end position="4981"/>
    </location>
</feature>
<feature type="domain" description="Cadherin 1" evidence="3">
    <location>
        <begin position="44"/>
        <end position="135"/>
    </location>
</feature>
<feature type="domain" description="Cadherin 2" evidence="3">
    <location>
        <begin position="136"/>
        <end position="250"/>
    </location>
</feature>
<feature type="domain" description="Cadherin 3" evidence="3">
    <location>
        <begin position="251"/>
        <end position="353"/>
    </location>
</feature>
<feature type="domain" description="Cadherin 4" evidence="3">
    <location>
        <begin position="359"/>
        <end position="475"/>
    </location>
</feature>
<feature type="domain" description="Cadherin 5" evidence="3">
    <location>
        <begin position="476"/>
        <end position="582"/>
    </location>
</feature>
<feature type="domain" description="Cadherin 6" evidence="3">
    <location>
        <begin position="584"/>
        <end position="689"/>
    </location>
</feature>
<feature type="domain" description="Cadherin 7" evidence="3">
    <location>
        <begin position="690"/>
        <end position="793"/>
    </location>
</feature>
<feature type="domain" description="Cadherin 8" evidence="3">
    <location>
        <begin position="794"/>
        <end position="893"/>
    </location>
</feature>
<feature type="domain" description="Cadherin 9" evidence="3">
    <location>
        <begin position="894"/>
        <end position="996"/>
    </location>
</feature>
<feature type="domain" description="Cadherin 10" evidence="3">
    <location>
        <begin position="997"/>
        <end position="1100"/>
    </location>
</feature>
<feature type="domain" description="Cadherin 11" evidence="3">
    <location>
        <begin position="1101"/>
        <end position="1210"/>
    </location>
</feature>
<feature type="domain" description="Cadherin 12" evidence="3">
    <location>
        <begin position="1211"/>
        <end position="1315"/>
    </location>
</feature>
<feature type="domain" description="Cadherin 13" evidence="3">
    <location>
        <begin position="1316"/>
        <end position="1420"/>
    </location>
</feature>
<feature type="domain" description="Cadherin 14" evidence="3">
    <location>
        <begin position="1421"/>
        <end position="1529"/>
    </location>
</feature>
<feature type="domain" description="Cadherin 15" evidence="3">
    <location>
        <begin position="1529"/>
        <end position="1629"/>
    </location>
</feature>
<feature type="domain" description="Cadherin 16" evidence="3">
    <location>
        <begin position="1630"/>
        <end position="1740"/>
    </location>
</feature>
<feature type="domain" description="Cadherin 17" evidence="3">
    <location>
        <begin position="1741"/>
        <end position="1841"/>
    </location>
</feature>
<feature type="domain" description="Cadherin 18" evidence="3">
    <location>
        <begin position="1842"/>
        <end position="1944"/>
    </location>
</feature>
<feature type="domain" description="Cadherin 19" evidence="3">
    <location>
        <begin position="1945"/>
        <end position="2051"/>
    </location>
</feature>
<feature type="domain" description="Cadherin 20" evidence="3">
    <location>
        <begin position="2051"/>
        <end position="2154"/>
    </location>
</feature>
<feature type="domain" description="Cadherin 21" evidence="3">
    <location>
        <begin position="2155"/>
        <end position="2259"/>
    </location>
</feature>
<feature type="domain" description="Cadherin 22" evidence="3">
    <location>
        <begin position="2260"/>
        <end position="2364"/>
    </location>
</feature>
<feature type="domain" description="Cadherin 23" evidence="3">
    <location>
        <begin position="2365"/>
        <end position="2468"/>
    </location>
</feature>
<feature type="domain" description="Cadherin 24" evidence="3">
    <location>
        <begin position="2469"/>
        <end position="2569"/>
    </location>
</feature>
<feature type="domain" description="Cadherin 25" evidence="3">
    <location>
        <begin position="2570"/>
        <end position="2671"/>
    </location>
</feature>
<feature type="domain" description="Cadherin 26" evidence="3">
    <location>
        <begin position="2672"/>
        <end position="2775"/>
    </location>
</feature>
<feature type="domain" description="Cadherin 27" evidence="3">
    <location>
        <begin position="2775"/>
        <end position="2874"/>
    </location>
</feature>
<feature type="domain" description="Cadherin 28" evidence="3">
    <location>
        <begin position="2875"/>
        <end position="2985"/>
    </location>
</feature>
<feature type="domain" description="Cadherin 29" evidence="3">
    <location>
        <begin position="2986"/>
        <end position="3091"/>
    </location>
</feature>
<feature type="domain" description="Cadherin 30" evidence="3">
    <location>
        <begin position="3092"/>
        <end position="3196"/>
    </location>
</feature>
<feature type="domain" description="Cadherin 31" evidence="3">
    <location>
        <begin position="3197"/>
        <end position="3300"/>
    </location>
</feature>
<feature type="domain" description="Cadherin 32" evidence="3">
    <location>
        <begin position="3301"/>
        <end position="3406"/>
    </location>
</feature>
<feature type="domain" description="Cadherin 33" evidence="3">
    <location>
        <begin position="3407"/>
        <end position="3512"/>
    </location>
</feature>
<feature type="domain" description="Cadherin 34" evidence="3">
    <location>
        <begin position="3511"/>
        <end position="3622"/>
    </location>
</feature>
<feature type="domain" description="EGF-like 1" evidence="4">
    <location>
        <begin position="3804"/>
        <end position="3862"/>
    </location>
</feature>
<feature type="domain" description="EGF-like 2; calcium-binding" evidence="4">
    <location>
        <begin position="3864"/>
        <end position="3900"/>
    </location>
</feature>
<feature type="domain" description="EGF-like 3; calcium-binding" evidence="4">
    <location>
        <begin position="3902"/>
        <end position="3938"/>
    </location>
</feature>
<feature type="domain" description="EGF-like 4" evidence="4">
    <location>
        <begin position="3940"/>
        <end position="3976"/>
    </location>
</feature>
<feature type="domain" description="Laminin G-like 1" evidence="5">
    <location>
        <begin position="3977"/>
        <end position="4161"/>
    </location>
</feature>
<feature type="domain" description="EGF-like 5" evidence="4">
    <location>
        <begin position="4164"/>
        <end position="4200"/>
    </location>
</feature>
<feature type="domain" description="Laminin G-like 2" evidence="5">
    <location>
        <begin position="4219"/>
        <end position="4399"/>
    </location>
</feature>
<feature type="domain" description="EGF-like 6" evidence="4">
    <location>
        <begin position="4427"/>
        <end position="4464"/>
    </location>
</feature>
<feature type="region of interest" description="Disordered" evidence="6">
    <location>
        <begin position="4535"/>
        <end position="4585"/>
    </location>
</feature>
<feature type="region of interest" description="Disordered" evidence="6">
    <location>
        <begin position="4677"/>
        <end position="4713"/>
    </location>
</feature>
<feature type="region of interest" description="Necessary and sufficient for interaction with MPDZ" evidence="9">
    <location>
        <begin position="4708"/>
        <end position="4797"/>
    </location>
</feature>
<feature type="region of interest" description="Disordered" evidence="6">
    <location>
        <begin position="4753"/>
        <end position="4773"/>
    </location>
</feature>
<feature type="region of interest" description="Disordered" evidence="6">
    <location>
        <begin position="4796"/>
        <end position="4911"/>
    </location>
</feature>
<feature type="region of interest" description="Disordered" evidence="6">
    <location>
        <begin position="4957"/>
        <end position="4981"/>
    </location>
</feature>
<feature type="compositionally biased region" description="Polar residues" evidence="6">
    <location>
        <begin position="4677"/>
        <end position="4701"/>
    </location>
</feature>
<feature type="compositionally biased region" description="Basic and acidic residues" evidence="6">
    <location>
        <begin position="4811"/>
        <end position="4823"/>
    </location>
</feature>
<feature type="compositionally biased region" description="Basic and acidic residues" evidence="6">
    <location>
        <begin position="4971"/>
        <end position="4981"/>
    </location>
</feature>
<feature type="modified residue" description="Phosphoserine" evidence="14">
    <location>
        <position position="4878"/>
    </location>
</feature>
<feature type="glycosylation site" description="N-linked (GlcNAc...) asparagine" evidence="2">
    <location>
        <position position="84"/>
    </location>
</feature>
<feature type="glycosylation site" description="N-linked (GlcNAc...) asparagine" evidence="2">
    <location>
        <position position="237"/>
    </location>
</feature>
<feature type="glycosylation site" description="N-linked (GlcNAc...) asparagine" evidence="2">
    <location>
        <position position="393"/>
    </location>
</feature>
<feature type="glycosylation site" description="N-linked (GlcNAc...) asparagine" evidence="2">
    <location>
        <position position="416"/>
    </location>
</feature>
<feature type="glycosylation site" description="N-linked (GlcNAc...) asparagine" evidence="2">
    <location>
        <position position="435"/>
    </location>
</feature>
<feature type="glycosylation site" description="N-linked (GlcNAc...) asparagine" evidence="2">
    <location>
        <position position="483"/>
    </location>
</feature>
<feature type="glycosylation site" description="N-linked (GlcNAc...) asparagine" evidence="2">
    <location>
        <position position="551"/>
    </location>
</feature>
<feature type="glycosylation site" description="N-linked (GlcNAc...) asparagine" evidence="2">
    <location>
        <position position="615"/>
    </location>
</feature>
<feature type="glycosylation site" description="N-linked (GlcNAc...) asparagine" evidence="2">
    <location>
        <position position="676"/>
    </location>
</feature>
<feature type="glycosylation site" description="N-linked (GlcNAc...) asparagine" evidence="2">
    <location>
        <position position="721"/>
    </location>
</feature>
<feature type="glycosylation site" description="N-linked (GlcNAc...) asparagine" evidence="2">
    <location>
        <position position="825"/>
    </location>
</feature>
<feature type="glycosylation site" description="N-linked (GlcNAc...) asparagine" evidence="2">
    <location>
        <position position="880"/>
    </location>
</feature>
<feature type="glycosylation site" description="N-linked (GlcNAc...) asparagine" evidence="2">
    <location>
        <position position="948"/>
    </location>
</feature>
<feature type="glycosylation site" description="N-linked (GlcNAc...) asparagine" evidence="2">
    <location>
        <position position="1085"/>
    </location>
</feature>
<feature type="glycosylation site" description="N-linked (GlcNAc...) asparagine" evidence="2">
    <location>
        <position position="1101"/>
    </location>
</feature>
<feature type="glycosylation site" description="N-linked (GlcNAc...) asparagine" evidence="2">
    <location>
        <position position="1104"/>
    </location>
</feature>
<feature type="glycosylation site" description="N-linked (GlcNAc...) asparagine" evidence="2">
    <location>
        <position position="1225"/>
    </location>
</feature>
<feature type="glycosylation site" description="N-linked (GlcNAc...) asparagine" evidence="2">
    <location>
        <position position="1296"/>
    </location>
</feature>
<feature type="glycosylation site" description="N-linked (GlcNAc...) asparagine" evidence="2">
    <location>
        <position position="1389"/>
    </location>
</feature>
<feature type="glycosylation site" description="N-linked (GlcNAc...) asparagine" evidence="2">
    <location>
        <position position="1514"/>
    </location>
</feature>
<feature type="glycosylation site" description="N-linked (GlcNAc...) asparagine" evidence="2">
    <location>
        <position position="1828"/>
    </location>
</feature>
<feature type="glycosylation site" description="N-linked (GlcNAc...) asparagine" evidence="2">
    <location>
        <position position="1899"/>
    </location>
</feature>
<feature type="glycosylation site" description="N-linked (GlcNAc...) asparagine" evidence="2">
    <location>
        <position position="1967"/>
    </location>
</feature>
<feature type="glycosylation site" description="N-linked (GlcNAc...) asparagine" evidence="2">
    <location>
        <position position="2119"/>
    </location>
</feature>
<feature type="glycosylation site" description="N-linked (GlcNAc...) asparagine" evidence="2">
    <location>
        <position position="2387"/>
    </location>
</feature>
<feature type="glycosylation site" description="N-linked (GlcNAc...) asparagine" evidence="2">
    <location>
        <position position="2432"/>
    </location>
</feature>
<feature type="glycosylation site" description="N-linked (GlcNAc...) asparagine" evidence="2">
    <location>
        <position position="2923"/>
    </location>
</feature>
<feature type="glycosylation site" description="N-linked (GlcNAc...) asparagine" evidence="2">
    <location>
        <position position="2939"/>
    </location>
</feature>
<feature type="glycosylation site" description="N-linked (GlcNAc...) asparagine" evidence="2">
    <location>
        <position position="3038"/>
    </location>
</feature>
<feature type="glycosylation site" description="N-linked (GlcNAc...) asparagine" evidence="2">
    <location>
        <position position="3142"/>
    </location>
</feature>
<feature type="glycosylation site" description="N-linked (GlcNAc...) asparagine" evidence="2">
    <location>
        <position position="3219"/>
    </location>
</feature>
<feature type="glycosylation site" description="N-linked (GlcNAc...) asparagine" evidence="2">
    <location>
        <position position="3394"/>
    </location>
</feature>
<feature type="glycosylation site" description="N-linked (GlcNAc...) asparagine" evidence="2">
    <location>
        <position position="3479"/>
    </location>
</feature>
<feature type="glycosylation site" description="N-linked (GlcNAc...) asparagine" evidence="2">
    <location>
        <position position="3708"/>
    </location>
</feature>
<feature type="glycosylation site" description="N-linked (GlcNAc...) asparagine" evidence="2">
    <location>
        <position position="3760"/>
    </location>
</feature>
<feature type="glycosylation site" description="N-linked (GlcNAc...) asparagine" evidence="2">
    <location>
        <position position="4019"/>
    </location>
</feature>
<feature type="glycosylation site" description="N-linked (GlcNAc...) asparagine" evidence="2">
    <location>
        <position position="4269"/>
    </location>
</feature>
<feature type="glycosylation site" description="N-linked (GlcNAc...) asparagine" evidence="2">
    <location>
        <position position="4314"/>
    </location>
</feature>
<feature type="disulfide bond" evidence="1">
    <location>
        <begin position="3808"/>
        <end position="3819"/>
    </location>
</feature>
<feature type="disulfide bond" evidence="1">
    <location>
        <begin position="3813"/>
        <end position="3850"/>
    </location>
</feature>
<feature type="disulfide bond" evidence="1">
    <location>
        <begin position="3852"/>
        <end position="3861"/>
    </location>
</feature>
<feature type="disulfide bond" evidence="1">
    <location>
        <begin position="3868"/>
        <end position="3879"/>
    </location>
</feature>
<feature type="disulfide bond" evidence="1">
    <location>
        <begin position="3873"/>
        <end position="3888"/>
    </location>
</feature>
<feature type="disulfide bond" evidence="1">
    <location>
        <begin position="3890"/>
        <end position="3899"/>
    </location>
</feature>
<feature type="disulfide bond" evidence="1">
    <location>
        <begin position="3906"/>
        <end position="3917"/>
    </location>
</feature>
<feature type="disulfide bond" evidence="1">
    <location>
        <begin position="3911"/>
        <end position="3926"/>
    </location>
</feature>
<feature type="disulfide bond" evidence="1">
    <location>
        <begin position="3928"/>
        <end position="3937"/>
    </location>
</feature>
<feature type="disulfide bond" evidence="1">
    <location>
        <begin position="3944"/>
        <end position="3955"/>
    </location>
</feature>
<feature type="disulfide bond" evidence="1">
    <location>
        <begin position="3949"/>
        <end position="3964"/>
    </location>
</feature>
<feature type="disulfide bond" evidence="1">
    <location>
        <begin position="3966"/>
        <end position="3975"/>
    </location>
</feature>
<feature type="disulfide bond" evidence="1">
    <location>
        <begin position="4135"/>
        <end position="4161"/>
    </location>
</feature>
<feature type="disulfide bond" evidence="1">
    <location>
        <begin position="4168"/>
        <end position="4179"/>
    </location>
</feature>
<feature type="disulfide bond" evidence="1">
    <location>
        <begin position="4173"/>
        <end position="4188"/>
    </location>
</feature>
<feature type="disulfide bond" evidence="1">
    <location>
        <begin position="4190"/>
        <end position="4199"/>
    </location>
</feature>
<feature type="disulfide bond" evidence="1">
    <location>
        <begin position="4366"/>
        <end position="4399"/>
    </location>
</feature>
<feature type="disulfide bond" evidence="1">
    <location>
        <begin position="4431"/>
        <end position="4442"/>
    </location>
</feature>
<feature type="disulfide bond" evidence="1">
    <location>
        <begin position="4436"/>
        <end position="4452"/>
    </location>
</feature>
<feature type="disulfide bond" evidence="1">
    <location>
        <begin position="4454"/>
        <end position="4463"/>
    </location>
</feature>
<feature type="splice variant" id="VSP_032339" description="In isoform 2." evidence="12">
    <original>VNSQ</original>
    <variation>MSFL</variation>
    <location>
        <begin position="1975"/>
        <end position="1978"/>
    </location>
</feature>
<feature type="splice variant" id="VSP_032340" description="In isoform 2." evidence="12">
    <location>
        <begin position="1979"/>
        <end position="4981"/>
    </location>
</feature>
<feature type="sequence conflict" description="In Ref. 1; ABB88946." evidence="13" ref="1">
    <original>S</original>
    <variation>N</variation>
    <location>
        <position position="1481"/>
    </location>
</feature>
<protein>
    <recommendedName>
        <fullName>Protocadherin Fat 4</fullName>
    </recommendedName>
    <alternativeName>
        <fullName>FAT tumor suppressor homolog 4</fullName>
    </alternativeName>
    <alternativeName>
        <fullName>Fat-like cadherin protein FAT-J</fullName>
    </alternativeName>
</protein>
<comment type="function">
    <text evidence="8 11">Cadherins are cell-cell interaction molecules. FAT4 plays a role in the maintenance of planar cell polarity as well as in inhibition of YAP1-mediated neuroprogenitor cell proliferation and differentiation.</text>
</comment>
<comment type="subunit">
    <text evidence="9">Heterophilic interaction with DCHS1; this interaction affects their respective protein levels. Interacts (via cytoplasmic domain) with MPDZ. Forms a complex with PALS1 and MPDZ.</text>
</comment>
<comment type="subcellular location">
    <subcellularLocation>
        <location evidence="13">Membrane</location>
        <topology evidence="13">Single-pass type I membrane protein</topology>
    </subcellularLocation>
    <text evidence="1">In the kidney, localizes to primary cilia.</text>
</comment>
<comment type="alternative products">
    <event type="alternative splicing"/>
    <isoform>
        <id>Q2PZL6-1</id>
        <name>1</name>
        <sequence type="displayed"/>
    </isoform>
    <isoform>
        <id>Q2PZL6-2</id>
        <name>2</name>
        <sequence type="described" ref="VSP_032339 VSP_032340"/>
    </isoform>
</comment>
<comment type="tissue specificity">
    <text evidence="7">Widely expressed.</text>
</comment>
<comment type="developmental stage">
    <text evidence="11">Expressed in all layers of the developing brain, with expression being most prominent at the ventricular margin.</text>
</comment>
<comment type="disruption phenotype">
    <text evidence="8 10 11">Deficient mice exhibit postnatal lethality, growth retardation, small lungs, abnormal cochlea morphology, abnormal kidney morphology, cardiovascular abnormalities and skeletal abnormalities. DCHS1 and FAT4 single mutants and DCHS1/FAT4 double mutants have similar phenotypes.</text>
</comment>
<comment type="sequence caution" evidence="13">
    <conflict type="erroneous initiation">
        <sequence resource="EMBL-CDS" id="BAC27359"/>
    </conflict>
    <text>Truncated N-terminus.</text>
</comment>
<comment type="sequence caution" evidence="13">
    <conflict type="erroneous initiation">
        <sequence resource="EMBL-CDS" id="BAC28751"/>
    </conflict>
    <text>Truncated N-terminus.</text>
</comment>
<name>FAT4_MOUSE</name>
<gene>
    <name type="primary">Fat4</name>
    <name type="synonym">Fatj</name>
</gene>
<dbReference type="EMBL" id="DQ286572">
    <property type="protein sequence ID" value="ABB88946.1"/>
    <property type="molecule type" value="mRNA"/>
</dbReference>
<dbReference type="EMBL" id="AC122841">
    <property type="status" value="NOT_ANNOTATED_CDS"/>
    <property type="molecule type" value="Genomic_DNA"/>
</dbReference>
<dbReference type="EMBL" id="AC161228">
    <property type="status" value="NOT_ANNOTATED_CDS"/>
    <property type="molecule type" value="Genomic_DNA"/>
</dbReference>
<dbReference type="EMBL" id="AK031348">
    <property type="protein sequence ID" value="BAC27359.1"/>
    <property type="status" value="ALT_INIT"/>
    <property type="molecule type" value="mRNA"/>
</dbReference>
<dbReference type="EMBL" id="AK034552">
    <property type="protein sequence ID" value="BAC28751.1"/>
    <property type="status" value="ALT_INIT"/>
    <property type="molecule type" value="mRNA"/>
</dbReference>
<dbReference type="EMBL" id="BC079887">
    <property type="protein sequence ID" value="AAH79887.1"/>
    <property type="molecule type" value="mRNA"/>
</dbReference>
<dbReference type="CCDS" id="CCDS17325.1">
    <molecule id="Q2PZL6-1"/>
</dbReference>
<dbReference type="RefSeq" id="NP_899044.3">
    <molecule id="Q2PZL6-1"/>
    <property type="nucleotide sequence ID" value="NM_183221.4"/>
</dbReference>
<dbReference type="RefSeq" id="XP_006535547.1">
    <property type="nucleotide sequence ID" value="XM_006535484.3"/>
</dbReference>
<dbReference type="SMR" id="Q2PZL6"/>
<dbReference type="FunCoup" id="Q2PZL6">
    <property type="interactions" value="63"/>
</dbReference>
<dbReference type="IntAct" id="Q2PZL6">
    <property type="interactions" value="1"/>
</dbReference>
<dbReference type="STRING" id="10090.ENSMUSP00000061836"/>
<dbReference type="GlyConnect" id="2656">
    <property type="glycosylation" value="1 N-Linked glycan (1 site)"/>
</dbReference>
<dbReference type="GlyCosmos" id="Q2PZL6">
    <property type="glycosylation" value="38 sites, 1 glycan"/>
</dbReference>
<dbReference type="GlyGen" id="Q2PZL6">
    <property type="glycosylation" value="46 sites, 10 N-linked glycans (18 sites), 1 O-linked glycan (3 sites)"/>
</dbReference>
<dbReference type="iPTMnet" id="Q2PZL6"/>
<dbReference type="PhosphoSitePlus" id="Q2PZL6"/>
<dbReference type="PaxDb" id="10090-ENSMUSP00000061836"/>
<dbReference type="PeptideAtlas" id="Q2PZL6"/>
<dbReference type="ProteomicsDB" id="275590">
    <molecule id="Q2PZL6-1"/>
</dbReference>
<dbReference type="ProteomicsDB" id="275591">
    <molecule id="Q2PZL6-2"/>
</dbReference>
<dbReference type="Pumba" id="Q2PZL6"/>
<dbReference type="Antibodypedia" id="62649">
    <property type="antibodies" value="114 antibodies from 18 providers"/>
</dbReference>
<dbReference type="Ensembl" id="ENSMUST00000061260.8">
    <molecule id="Q2PZL6-1"/>
    <property type="protein sequence ID" value="ENSMUSP00000061836.8"/>
    <property type="gene ID" value="ENSMUSG00000046743.7"/>
</dbReference>
<dbReference type="GeneID" id="329628"/>
<dbReference type="KEGG" id="mmu:329628"/>
<dbReference type="UCSC" id="uc008pbe.1">
    <molecule id="Q2PZL6-2"/>
    <property type="organism name" value="mouse"/>
</dbReference>
<dbReference type="UCSC" id="uc008pbf.1">
    <molecule id="Q2PZL6-1"/>
    <property type="organism name" value="mouse"/>
</dbReference>
<dbReference type="AGR" id="MGI:3045256"/>
<dbReference type="CTD" id="79633"/>
<dbReference type="MGI" id="MGI:3045256">
    <property type="gene designation" value="Fat4"/>
</dbReference>
<dbReference type="VEuPathDB" id="HostDB:ENSMUSG00000046743"/>
<dbReference type="eggNOG" id="KOG1217">
    <property type="taxonomic scope" value="Eukaryota"/>
</dbReference>
<dbReference type="eggNOG" id="KOG3594">
    <property type="taxonomic scope" value="Eukaryota"/>
</dbReference>
<dbReference type="GeneTree" id="ENSGT00940000155719"/>
<dbReference type="HOGENOM" id="CLU_000042_1_0_1"/>
<dbReference type="InParanoid" id="Q2PZL6"/>
<dbReference type="OMA" id="AGGMRKY"/>
<dbReference type="OrthoDB" id="6252479at2759"/>
<dbReference type="PhylomeDB" id="Q2PZL6"/>
<dbReference type="TreeFam" id="TF331335"/>
<dbReference type="BioGRID-ORCS" id="329628">
    <property type="hits" value="3 hits in 76 CRISPR screens"/>
</dbReference>
<dbReference type="ChiTaRS" id="Fat4">
    <property type="organism name" value="mouse"/>
</dbReference>
<dbReference type="PRO" id="PR:Q2PZL6"/>
<dbReference type="Proteomes" id="UP000000589">
    <property type="component" value="Chromosome 3"/>
</dbReference>
<dbReference type="RNAct" id="Q2PZL6">
    <property type="molecule type" value="protein"/>
</dbReference>
<dbReference type="Bgee" id="ENSMUSG00000046743">
    <property type="expression patterns" value="Expressed in manus and 187 other cell types or tissues"/>
</dbReference>
<dbReference type="GO" id="GO:0045177">
    <property type="term" value="C:apical part of cell"/>
    <property type="evidence" value="ECO:0000314"/>
    <property type="project" value="MGI"/>
</dbReference>
<dbReference type="GO" id="GO:0005886">
    <property type="term" value="C:plasma membrane"/>
    <property type="evidence" value="ECO:0007669"/>
    <property type="project" value="InterPro"/>
</dbReference>
<dbReference type="GO" id="GO:0005509">
    <property type="term" value="F:calcium ion binding"/>
    <property type="evidence" value="ECO:0007669"/>
    <property type="project" value="InterPro"/>
</dbReference>
<dbReference type="GO" id="GO:0001658">
    <property type="term" value="P:branching involved in ureteric bud morphogenesis"/>
    <property type="evidence" value="ECO:0000315"/>
    <property type="project" value="MGI"/>
</dbReference>
<dbReference type="GO" id="GO:0021987">
    <property type="term" value="P:cerebral cortex development"/>
    <property type="evidence" value="ECO:0000315"/>
    <property type="project" value="UniProtKB"/>
</dbReference>
<dbReference type="GO" id="GO:0072137">
    <property type="term" value="P:condensed mesenchymal cell proliferation"/>
    <property type="evidence" value="ECO:0000315"/>
    <property type="project" value="MGI"/>
</dbReference>
<dbReference type="GO" id="GO:0048565">
    <property type="term" value="P:digestive tract development"/>
    <property type="evidence" value="ECO:0000315"/>
    <property type="project" value="MGI"/>
</dbReference>
<dbReference type="GO" id="GO:0001736">
    <property type="term" value="P:establishment of planar polarity"/>
    <property type="evidence" value="ECO:0000305"/>
    <property type="project" value="MGI"/>
</dbReference>
<dbReference type="GO" id="GO:0008543">
    <property type="term" value="P:fibroblast growth factor receptor signaling pathway"/>
    <property type="evidence" value="ECO:0000315"/>
    <property type="project" value="MGI"/>
</dbReference>
<dbReference type="GO" id="GO:0003007">
    <property type="term" value="P:heart morphogenesis"/>
    <property type="evidence" value="ECO:0000315"/>
    <property type="project" value="MGI"/>
</dbReference>
<dbReference type="GO" id="GO:0007157">
    <property type="term" value="P:heterophilic cell-cell adhesion via plasma membrane cell adhesion molecules"/>
    <property type="evidence" value="ECO:0000314"/>
    <property type="project" value="UniProtKB"/>
</dbReference>
<dbReference type="GO" id="GO:0035329">
    <property type="term" value="P:hippo signaling"/>
    <property type="evidence" value="ECO:0000315"/>
    <property type="project" value="UniProtKB"/>
</dbReference>
<dbReference type="GO" id="GO:0007156">
    <property type="term" value="P:homophilic cell adhesion via plasma membrane adhesion molecules"/>
    <property type="evidence" value="ECO:0007669"/>
    <property type="project" value="InterPro"/>
</dbReference>
<dbReference type="GO" id="GO:0060122">
    <property type="term" value="P:inner ear receptor cell stereocilium organization"/>
    <property type="evidence" value="ECO:0000315"/>
    <property type="project" value="MGI"/>
</dbReference>
<dbReference type="GO" id="GO:0001822">
    <property type="term" value="P:kidney development"/>
    <property type="evidence" value="ECO:0000315"/>
    <property type="project" value="MGI"/>
</dbReference>
<dbReference type="GO" id="GO:0072006">
    <property type="term" value="P:nephron development"/>
    <property type="evidence" value="ECO:0000315"/>
    <property type="project" value="MGI"/>
</dbReference>
<dbReference type="GO" id="GO:0022008">
    <property type="term" value="P:neurogenesis"/>
    <property type="evidence" value="ECO:0000315"/>
    <property type="project" value="UniProtKB"/>
</dbReference>
<dbReference type="GO" id="GO:0007219">
    <property type="term" value="P:Notch signaling pathway"/>
    <property type="evidence" value="ECO:0000315"/>
    <property type="project" value="MGI"/>
</dbReference>
<dbReference type="GO" id="GO:0043931">
    <property type="term" value="P:ossification involved in bone maturation"/>
    <property type="evidence" value="ECO:0000315"/>
    <property type="project" value="MGI"/>
</dbReference>
<dbReference type="GO" id="GO:0007009">
    <property type="term" value="P:plasma membrane organization"/>
    <property type="evidence" value="ECO:0000315"/>
    <property type="project" value="MGI"/>
</dbReference>
<dbReference type="GO" id="GO:0072307">
    <property type="term" value="P:regulation of metanephric nephron tubule epithelial cell differentiation"/>
    <property type="evidence" value="ECO:0000315"/>
    <property type="project" value="MGI"/>
</dbReference>
<dbReference type="CDD" id="cd11304">
    <property type="entry name" value="Cadherin_repeat"/>
    <property type="match status" value="34"/>
</dbReference>
<dbReference type="CDD" id="cd00054">
    <property type="entry name" value="EGF_CA"/>
    <property type="match status" value="6"/>
</dbReference>
<dbReference type="CDD" id="cd00110">
    <property type="entry name" value="LamG"/>
    <property type="match status" value="2"/>
</dbReference>
<dbReference type="FunFam" id="2.60.40.60:FF:000010">
    <property type="entry name" value="Cadherin EGF LAG seven-pass G-type receptor 3"/>
    <property type="match status" value="5"/>
</dbReference>
<dbReference type="FunFam" id="2.60.40.60:FF:000029">
    <property type="entry name" value="Cadherin EGF LAG seven-pass G-type receptor 3"/>
    <property type="match status" value="1"/>
</dbReference>
<dbReference type="FunFam" id="2.60.40.60:FF:000135">
    <property type="entry name" value="cadherin-23 isoform X1"/>
    <property type="match status" value="1"/>
</dbReference>
<dbReference type="FunFam" id="2.60.40.60:FF:000020">
    <property type="entry name" value="Dachsous cadherin-related 1b"/>
    <property type="match status" value="1"/>
</dbReference>
<dbReference type="FunFam" id="2.60.40.60:FF:000024">
    <property type="entry name" value="FAT atypical cadherin 3"/>
    <property type="match status" value="4"/>
</dbReference>
<dbReference type="FunFam" id="2.10.25.10:FF:000066">
    <property type="entry name" value="FAT atypical cadherin 4"/>
    <property type="match status" value="1"/>
</dbReference>
<dbReference type="FunFam" id="2.10.25.10:FF:000151">
    <property type="entry name" value="FAT atypical cadherin 4"/>
    <property type="match status" value="1"/>
</dbReference>
<dbReference type="FunFam" id="2.10.25.10:FF:000168">
    <property type="entry name" value="FAT atypical cadherin 4"/>
    <property type="match status" value="1"/>
</dbReference>
<dbReference type="FunFam" id="2.10.25.10:FF:000293">
    <property type="entry name" value="FAT atypical cadherin 4"/>
    <property type="match status" value="1"/>
</dbReference>
<dbReference type="FunFam" id="2.10.25.10:FF:001260">
    <property type="entry name" value="FAT atypical cadherin 4"/>
    <property type="match status" value="1"/>
</dbReference>
<dbReference type="FunFam" id="2.60.120.200:FF:000030">
    <property type="entry name" value="FAT atypical cadherin 4"/>
    <property type="match status" value="1"/>
</dbReference>
<dbReference type="FunFam" id="2.60.120.200:FF:000083">
    <property type="entry name" value="FAT atypical cadherin 4"/>
    <property type="match status" value="1"/>
</dbReference>
<dbReference type="FunFam" id="2.60.40.60:FF:000101">
    <property type="entry name" value="FAT atypical cadherin 4"/>
    <property type="match status" value="1"/>
</dbReference>
<dbReference type="FunFam" id="2.60.40.60:FF:000106">
    <property type="entry name" value="FAT atypical cadherin 4"/>
    <property type="match status" value="1"/>
</dbReference>
<dbReference type="FunFam" id="2.60.40.60:FF:000108">
    <property type="entry name" value="FAT atypical cadherin 4"/>
    <property type="match status" value="1"/>
</dbReference>
<dbReference type="FunFam" id="2.60.40.60:FF:000110">
    <property type="entry name" value="FAT atypical cadherin 4"/>
    <property type="match status" value="1"/>
</dbReference>
<dbReference type="FunFam" id="2.60.40.60:FF:000114">
    <property type="entry name" value="FAT atypical cadherin 4"/>
    <property type="match status" value="2"/>
</dbReference>
<dbReference type="FunFam" id="2.60.40.60:FF:000115">
    <property type="entry name" value="FAT atypical cadherin 4"/>
    <property type="match status" value="1"/>
</dbReference>
<dbReference type="FunFam" id="2.60.40.60:FF:000131">
    <property type="entry name" value="FAT atypical cadherin 4"/>
    <property type="match status" value="1"/>
</dbReference>
<dbReference type="FunFam" id="2.60.40.60:FF:000137">
    <property type="entry name" value="FAT atypical cadherin 4"/>
    <property type="match status" value="1"/>
</dbReference>
<dbReference type="FunFam" id="2.60.40.60:FF:000138">
    <property type="entry name" value="FAT atypical cadherin 4"/>
    <property type="match status" value="1"/>
</dbReference>
<dbReference type="FunFam" id="2.60.40.60:FF:000143">
    <property type="entry name" value="FAT atypical cadherin 4"/>
    <property type="match status" value="1"/>
</dbReference>
<dbReference type="FunFam" id="2.60.40.60:FF:000144">
    <property type="entry name" value="FAT atypical cadherin 4"/>
    <property type="match status" value="1"/>
</dbReference>
<dbReference type="FunFam" id="2.60.40.60:FF:000154">
    <property type="entry name" value="FAT atypical cadherin 4"/>
    <property type="match status" value="1"/>
</dbReference>
<dbReference type="FunFam" id="2.60.40.60:FF:000170">
    <property type="entry name" value="FAT atypical cadherin 4"/>
    <property type="match status" value="1"/>
</dbReference>
<dbReference type="FunFam" id="2.60.40.60:FF:000171">
    <property type="entry name" value="FAT atypical cadherin 4"/>
    <property type="match status" value="1"/>
</dbReference>
<dbReference type="FunFam" id="2.60.40.60:FF:000174">
    <property type="entry name" value="FAT atypical cadherin 4"/>
    <property type="match status" value="1"/>
</dbReference>
<dbReference type="FunFam" id="2.60.40.60:FF:000176">
    <property type="entry name" value="FAT atypical cadherin 4"/>
    <property type="match status" value="1"/>
</dbReference>
<dbReference type="FunFam" id="2.60.40.60:FF:000180">
    <property type="entry name" value="FAT atypical cadherin 4"/>
    <property type="match status" value="1"/>
</dbReference>
<dbReference type="FunFam" id="2.60.40.60:FF:000189">
    <property type="entry name" value="FAT atypical cadherin 4"/>
    <property type="match status" value="1"/>
</dbReference>
<dbReference type="FunFam" id="2.60.40.60:FF:000081">
    <property type="entry name" value="protocadherin Fat 4"/>
    <property type="match status" value="1"/>
</dbReference>
<dbReference type="FunFam" id="2.60.40.60:FF:000118">
    <property type="entry name" value="protocadherin Fat 4"/>
    <property type="match status" value="1"/>
</dbReference>
<dbReference type="FunFam" id="2.60.40.60:FF:000134">
    <property type="entry name" value="protocadherin Fat 4"/>
    <property type="match status" value="1"/>
</dbReference>
<dbReference type="FunFam" id="2.10.25.10:FF:000335">
    <property type="entry name" value="protocadherin Fat 4 isoform X2"/>
    <property type="match status" value="1"/>
</dbReference>
<dbReference type="Gene3D" id="2.60.120.200">
    <property type="match status" value="2"/>
</dbReference>
<dbReference type="Gene3D" id="2.60.40.60">
    <property type="entry name" value="Cadherins"/>
    <property type="match status" value="34"/>
</dbReference>
<dbReference type="Gene3D" id="2.10.25.10">
    <property type="entry name" value="Laminin"/>
    <property type="match status" value="6"/>
</dbReference>
<dbReference type="InterPro" id="IPR050971">
    <property type="entry name" value="Cadherin-domain_protein"/>
</dbReference>
<dbReference type="InterPro" id="IPR002126">
    <property type="entry name" value="Cadherin-like_dom"/>
</dbReference>
<dbReference type="InterPro" id="IPR015919">
    <property type="entry name" value="Cadherin-like_sf"/>
</dbReference>
<dbReference type="InterPro" id="IPR020894">
    <property type="entry name" value="Cadherin_CS"/>
</dbReference>
<dbReference type="InterPro" id="IPR013320">
    <property type="entry name" value="ConA-like_dom_sf"/>
</dbReference>
<dbReference type="InterPro" id="IPR001881">
    <property type="entry name" value="EGF-like_Ca-bd_dom"/>
</dbReference>
<dbReference type="InterPro" id="IPR013032">
    <property type="entry name" value="EGF-like_CS"/>
</dbReference>
<dbReference type="InterPro" id="IPR000742">
    <property type="entry name" value="EGF-like_dom"/>
</dbReference>
<dbReference type="InterPro" id="IPR000152">
    <property type="entry name" value="EGF-type_Asp/Asn_hydroxyl_site"/>
</dbReference>
<dbReference type="InterPro" id="IPR018097">
    <property type="entry name" value="EGF_Ca-bd_CS"/>
</dbReference>
<dbReference type="InterPro" id="IPR009030">
    <property type="entry name" value="Growth_fac_rcpt_cys_sf"/>
</dbReference>
<dbReference type="InterPro" id="IPR001791">
    <property type="entry name" value="Laminin_G"/>
</dbReference>
<dbReference type="InterPro" id="IPR049883">
    <property type="entry name" value="NOTCH1_EGF-like"/>
</dbReference>
<dbReference type="PANTHER" id="PTHR24025">
    <property type="entry name" value="DESMOGLEIN FAMILY MEMBER"/>
    <property type="match status" value="1"/>
</dbReference>
<dbReference type="PANTHER" id="PTHR24025:SF31">
    <property type="entry name" value="NEURAL-CADHERIN"/>
    <property type="match status" value="1"/>
</dbReference>
<dbReference type="Pfam" id="PF00028">
    <property type="entry name" value="Cadherin"/>
    <property type="match status" value="33"/>
</dbReference>
<dbReference type="Pfam" id="PF25374">
    <property type="entry name" value="Cadherin_FAT4_N"/>
    <property type="match status" value="1"/>
</dbReference>
<dbReference type="Pfam" id="PF00008">
    <property type="entry name" value="EGF"/>
    <property type="match status" value="3"/>
</dbReference>
<dbReference type="Pfam" id="PF07645">
    <property type="entry name" value="EGF_CA"/>
    <property type="match status" value="1"/>
</dbReference>
<dbReference type="Pfam" id="PF12661">
    <property type="entry name" value="hEGF"/>
    <property type="match status" value="1"/>
</dbReference>
<dbReference type="Pfam" id="PF02210">
    <property type="entry name" value="Laminin_G_2"/>
    <property type="match status" value="2"/>
</dbReference>
<dbReference type="PRINTS" id="PR00205">
    <property type="entry name" value="CADHERIN"/>
</dbReference>
<dbReference type="SMART" id="SM00112">
    <property type="entry name" value="CA"/>
    <property type="match status" value="34"/>
</dbReference>
<dbReference type="SMART" id="SM00181">
    <property type="entry name" value="EGF"/>
    <property type="match status" value="6"/>
</dbReference>
<dbReference type="SMART" id="SM00179">
    <property type="entry name" value="EGF_CA"/>
    <property type="match status" value="5"/>
</dbReference>
<dbReference type="SMART" id="SM00282">
    <property type="entry name" value="LamG"/>
    <property type="match status" value="2"/>
</dbReference>
<dbReference type="SUPFAM" id="SSF49313">
    <property type="entry name" value="Cadherin-like"/>
    <property type="match status" value="34"/>
</dbReference>
<dbReference type="SUPFAM" id="SSF49899">
    <property type="entry name" value="Concanavalin A-like lectins/glucanases"/>
    <property type="match status" value="2"/>
</dbReference>
<dbReference type="SUPFAM" id="SSF57196">
    <property type="entry name" value="EGF/Laminin"/>
    <property type="match status" value="1"/>
</dbReference>
<dbReference type="SUPFAM" id="SSF57184">
    <property type="entry name" value="Growth factor receptor domain"/>
    <property type="match status" value="1"/>
</dbReference>
<dbReference type="PROSITE" id="PS00010">
    <property type="entry name" value="ASX_HYDROXYL"/>
    <property type="match status" value="2"/>
</dbReference>
<dbReference type="PROSITE" id="PS00232">
    <property type="entry name" value="CADHERIN_1"/>
    <property type="match status" value="22"/>
</dbReference>
<dbReference type="PROSITE" id="PS50268">
    <property type="entry name" value="CADHERIN_2"/>
    <property type="match status" value="34"/>
</dbReference>
<dbReference type="PROSITE" id="PS00022">
    <property type="entry name" value="EGF_1"/>
    <property type="match status" value="7"/>
</dbReference>
<dbReference type="PROSITE" id="PS01186">
    <property type="entry name" value="EGF_2"/>
    <property type="match status" value="3"/>
</dbReference>
<dbReference type="PROSITE" id="PS50026">
    <property type="entry name" value="EGF_3"/>
    <property type="match status" value="6"/>
</dbReference>
<dbReference type="PROSITE" id="PS01187">
    <property type="entry name" value="EGF_CA"/>
    <property type="match status" value="2"/>
</dbReference>
<dbReference type="PROSITE" id="PS50025">
    <property type="entry name" value="LAM_G_DOMAIN"/>
    <property type="match status" value="2"/>
</dbReference>
<keyword id="KW-0025">Alternative splicing</keyword>
<keyword id="KW-0106">Calcium</keyword>
<keyword id="KW-0130">Cell adhesion</keyword>
<keyword id="KW-1015">Disulfide bond</keyword>
<keyword id="KW-0245">EGF-like domain</keyword>
<keyword id="KW-0325">Glycoprotein</keyword>
<keyword id="KW-0472">Membrane</keyword>
<keyword id="KW-0597">Phosphoprotein</keyword>
<keyword id="KW-1185">Reference proteome</keyword>
<keyword id="KW-0677">Repeat</keyword>
<keyword id="KW-0732">Signal</keyword>
<keyword id="KW-0812">Transmembrane</keyword>
<keyword id="KW-1133">Transmembrane helix</keyword>
<reference key="1">
    <citation type="submission" date="2005-11" db="EMBL/GenBank/DDBJ databases">
        <title>Identification of Fat4 as the candidate tumor suppressor gene in breast cancers through random chromosome deletion.</title>
        <authorList>
            <person name="Qi C."/>
            <person name="Zhu Y.T."/>
            <person name="Hu L."/>
            <person name="Zhang Z."/>
            <person name="Rao S.M."/>
            <person name="Zhu Y.-J."/>
        </authorList>
    </citation>
    <scope>NUCLEOTIDE SEQUENCE [MRNA] (ISOFORM 1)</scope>
</reference>
<reference key="2">
    <citation type="journal article" date="2009" name="PLoS Biol.">
        <title>Lineage-specific biology revealed by a finished genome assembly of the mouse.</title>
        <authorList>
            <person name="Church D.M."/>
            <person name="Goodstadt L."/>
            <person name="Hillier L.W."/>
            <person name="Zody M.C."/>
            <person name="Goldstein S."/>
            <person name="She X."/>
            <person name="Bult C.J."/>
            <person name="Agarwala R."/>
            <person name="Cherry J.L."/>
            <person name="DiCuccio M."/>
            <person name="Hlavina W."/>
            <person name="Kapustin Y."/>
            <person name="Meric P."/>
            <person name="Maglott D."/>
            <person name="Birtle Z."/>
            <person name="Marques A.C."/>
            <person name="Graves T."/>
            <person name="Zhou S."/>
            <person name="Teague B."/>
            <person name="Potamousis K."/>
            <person name="Churas C."/>
            <person name="Place M."/>
            <person name="Herschleb J."/>
            <person name="Runnheim R."/>
            <person name="Forrest D."/>
            <person name="Amos-Landgraf J."/>
            <person name="Schwartz D.C."/>
            <person name="Cheng Z."/>
            <person name="Lindblad-Toh K."/>
            <person name="Eichler E.E."/>
            <person name="Ponting C.P."/>
        </authorList>
    </citation>
    <scope>NUCLEOTIDE SEQUENCE [LARGE SCALE GENOMIC DNA]</scope>
    <source>
        <strain>C57BL/6J</strain>
    </source>
</reference>
<reference key="3">
    <citation type="journal article" date="2005" name="Science">
        <title>The transcriptional landscape of the mammalian genome.</title>
        <authorList>
            <person name="Carninci P."/>
            <person name="Kasukawa T."/>
            <person name="Katayama S."/>
            <person name="Gough J."/>
            <person name="Frith M.C."/>
            <person name="Maeda N."/>
            <person name="Oyama R."/>
            <person name="Ravasi T."/>
            <person name="Lenhard B."/>
            <person name="Wells C."/>
            <person name="Kodzius R."/>
            <person name="Shimokawa K."/>
            <person name="Bajic V.B."/>
            <person name="Brenner S.E."/>
            <person name="Batalov S."/>
            <person name="Forrest A.R."/>
            <person name="Zavolan M."/>
            <person name="Davis M.J."/>
            <person name="Wilming L.G."/>
            <person name="Aidinis V."/>
            <person name="Allen J.E."/>
            <person name="Ambesi-Impiombato A."/>
            <person name="Apweiler R."/>
            <person name="Aturaliya R.N."/>
            <person name="Bailey T.L."/>
            <person name="Bansal M."/>
            <person name="Baxter L."/>
            <person name="Beisel K.W."/>
            <person name="Bersano T."/>
            <person name="Bono H."/>
            <person name="Chalk A.M."/>
            <person name="Chiu K.P."/>
            <person name="Choudhary V."/>
            <person name="Christoffels A."/>
            <person name="Clutterbuck D.R."/>
            <person name="Crowe M.L."/>
            <person name="Dalla E."/>
            <person name="Dalrymple B.P."/>
            <person name="de Bono B."/>
            <person name="Della Gatta G."/>
            <person name="di Bernardo D."/>
            <person name="Down T."/>
            <person name="Engstrom P."/>
            <person name="Fagiolini M."/>
            <person name="Faulkner G."/>
            <person name="Fletcher C.F."/>
            <person name="Fukushima T."/>
            <person name="Furuno M."/>
            <person name="Futaki S."/>
            <person name="Gariboldi M."/>
            <person name="Georgii-Hemming P."/>
            <person name="Gingeras T.R."/>
            <person name="Gojobori T."/>
            <person name="Green R.E."/>
            <person name="Gustincich S."/>
            <person name="Harbers M."/>
            <person name="Hayashi Y."/>
            <person name="Hensch T.K."/>
            <person name="Hirokawa N."/>
            <person name="Hill D."/>
            <person name="Huminiecki L."/>
            <person name="Iacono M."/>
            <person name="Ikeo K."/>
            <person name="Iwama A."/>
            <person name="Ishikawa T."/>
            <person name="Jakt M."/>
            <person name="Kanapin A."/>
            <person name="Katoh M."/>
            <person name="Kawasawa Y."/>
            <person name="Kelso J."/>
            <person name="Kitamura H."/>
            <person name="Kitano H."/>
            <person name="Kollias G."/>
            <person name="Krishnan S.P."/>
            <person name="Kruger A."/>
            <person name="Kummerfeld S.K."/>
            <person name="Kurochkin I.V."/>
            <person name="Lareau L.F."/>
            <person name="Lazarevic D."/>
            <person name="Lipovich L."/>
            <person name="Liu J."/>
            <person name="Liuni S."/>
            <person name="McWilliam S."/>
            <person name="Madan Babu M."/>
            <person name="Madera M."/>
            <person name="Marchionni L."/>
            <person name="Matsuda H."/>
            <person name="Matsuzawa S."/>
            <person name="Miki H."/>
            <person name="Mignone F."/>
            <person name="Miyake S."/>
            <person name="Morris K."/>
            <person name="Mottagui-Tabar S."/>
            <person name="Mulder N."/>
            <person name="Nakano N."/>
            <person name="Nakauchi H."/>
            <person name="Ng P."/>
            <person name="Nilsson R."/>
            <person name="Nishiguchi S."/>
            <person name="Nishikawa S."/>
            <person name="Nori F."/>
            <person name="Ohara O."/>
            <person name="Okazaki Y."/>
            <person name="Orlando V."/>
            <person name="Pang K.C."/>
            <person name="Pavan W.J."/>
            <person name="Pavesi G."/>
            <person name="Pesole G."/>
            <person name="Petrovsky N."/>
            <person name="Piazza S."/>
            <person name="Reed J."/>
            <person name="Reid J.F."/>
            <person name="Ring B.Z."/>
            <person name="Ringwald M."/>
            <person name="Rost B."/>
            <person name="Ruan Y."/>
            <person name="Salzberg S.L."/>
            <person name="Sandelin A."/>
            <person name="Schneider C."/>
            <person name="Schoenbach C."/>
            <person name="Sekiguchi K."/>
            <person name="Semple C.A."/>
            <person name="Seno S."/>
            <person name="Sessa L."/>
            <person name="Sheng Y."/>
            <person name="Shibata Y."/>
            <person name="Shimada H."/>
            <person name="Shimada K."/>
            <person name="Silva D."/>
            <person name="Sinclair B."/>
            <person name="Sperling S."/>
            <person name="Stupka E."/>
            <person name="Sugiura K."/>
            <person name="Sultana R."/>
            <person name="Takenaka Y."/>
            <person name="Taki K."/>
            <person name="Tammoja K."/>
            <person name="Tan S.L."/>
            <person name="Tang S."/>
            <person name="Taylor M.S."/>
            <person name="Tegner J."/>
            <person name="Teichmann S.A."/>
            <person name="Ueda H.R."/>
            <person name="van Nimwegen E."/>
            <person name="Verardo R."/>
            <person name="Wei C.L."/>
            <person name="Yagi K."/>
            <person name="Yamanishi H."/>
            <person name="Zabarovsky E."/>
            <person name="Zhu S."/>
            <person name="Zimmer A."/>
            <person name="Hide W."/>
            <person name="Bult C."/>
            <person name="Grimmond S.M."/>
            <person name="Teasdale R.D."/>
            <person name="Liu E.T."/>
            <person name="Brusic V."/>
            <person name="Quackenbush J."/>
            <person name="Wahlestedt C."/>
            <person name="Mattick J.S."/>
            <person name="Hume D.A."/>
            <person name="Kai C."/>
            <person name="Sasaki D."/>
            <person name="Tomaru Y."/>
            <person name="Fukuda S."/>
            <person name="Kanamori-Katayama M."/>
            <person name="Suzuki M."/>
            <person name="Aoki J."/>
            <person name="Arakawa T."/>
            <person name="Iida J."/>
            <person name="Imamura K."/>
            <person name="Itoh M."/>
            <person name="Kato T."/>
            <person name="Kawaji H."/>
            <person name="Kawagashira N."/>
            <person name="Kawashima T."/>
            <person name="Kojima M."/>
            <person name="Kondo S."/>
            <person name="Konno H."/>
            <person name="Nakano K."/>
            <person name="Ninomiya N."/>
            <person name="Nishio T."/>
            <person name="Okada M."/>
            <person name="Plessy C."/>
            <person name="Shibata K."/>
            <person name="Shiraki T."/>
            <person name="Suzuki S."/>
            <person name="Tagami M."/>
            <person name="Waki K."/>
            <person name="Watahiki A."/>
            <person name="Okamura-Oho Y."/>
            <person name="Suzuki H."/>
            <person name="Kawai J."/>
            <person name="Hayashizaki Y."/>
        </authorList>
    </citation>
    <scope>NUCLEOTIDE SEQUENCE [LARGE SCALE MRNA] OF 1329-4981 (ISOFORM 2)</scope>
    <scope>NUCLEOTIDE SEQUENCE [LARGE SCALE MRNA] OF 4473-4981 (ISOFORM 1)</scope>
    <source>
        <strain>C57BL/6J</strain>
        <tissue>Embryo</tissue>
        <tissue>Testis</tissue>
    </source>
</reference>
<reference key="4">
    <citation type="journal article" date="2004" name="Genome Res.">
        <title>The status, quality, and expansion of the NIH full-length cDNA project: the Mammalian Gene Collection (MGC).</title>
        <authorList>
            <consortium name="The MGC Project Team"/>
        </authorList>
    </citation>
    <scope>NUCLEOTIDE SEQUENCE [LARGE SCALE MRNA] OF 2963-4981 (ISOFORM 1)</scope>
    <source>
        <strain>C57BL/6J</strain>
        <tissue>Brain</tissue>
    </source>
</reference>
<reference key="5">
    <citation type="journal article" date="2004" name="Mol. Cell. Proteomics">
        <title>Phosphoproteomic analysis of the developing mouse brain.</title>
        <authorList>
            <person name="Ballif B.A."/>
            <person name="Villen J."/>
            <person name="Beausoleil S.A."/>
            <person name="Schwartz D."/>
            <person name="Gygi S.P."/>
        </authorList>
    </citation>
    <scope>PHOSPHORYLATION [LARGE SCALE ANALYSIS] AT SER-4878</scope>
    <scope>IDENTIFICATION BY MASS SPECTROMETRY [LARGE SCALE ANALYSIS]</scope>
    <source>
        <tissue>Embryonic brain</tissue>
    </source>
</reference>
<reference key="6">
    <citation type="journal article" date="2005" name="Dev. Dyn.">
        <title>Expression of mouse dchs1, fjx1, and fat-j suggests conservation of the planar cell polarity pathway identified in Drosophila.</title>
        <authorList>
            <person name="Rock R."/>
            <person name="Schrauth S."/>
            <person name="Gessler M."/>
        </authorList>
    </citation>
    <scope>TISSUE SPECIFICITY</scope>
</reference>
<reference key="7">
    <citation type="journal article" date="2008" name="Nat. Genet.">
        <title>Loss of Fat4 disrupts PCP signaling and oriented cell division and leads to cystic kidney disease.</title>
        <authorList>
            <person name="Saburi S."/>
            <person name="Hester I."/>
            <person name="Fischer E."/>
            <person name="Pontoglio M."/>
            <person name="Eremina V."/>
            <person name="Gessler M."/>
            <person name="Quaggin S.E."/>
            <person name="Harrison R."/>
            <person name="Mount R."/>
            <person name="McNeill H."/>
        </authorList>
    </citation>
    <scope>DISRUPTION PHENOTYPE</scope>
    <scope>FUNCTION</scope>
</reference>
<reference key="8">
    <citation type="journal article" date="2009" name="J. Cell Biol.">
        <title>Mammalian Fat and Dachsous cadherins regulate apical membrane organization in the embryonic cerebral cortex.</title>
        <authorList>
            <person name="Ishiuchi T."/>
            <person name="Misaki K."/>
            <person name="Yonemura S."/>
            <person name="Takeichi M."/>
            <person name="Tanoue T."/>
        </authorList>
    </citation>
    <scope>HETEROPHILIC INTERACTION WITH DCHS1</scope>
    <scope>INTERACTION WITH MPDZ</scope>
</reference>
<reference key="9">
    <citation type="journal article" date="2010" name="Cell">
        <title>A tissue-specific atlas of mouse protein phosphorylation and expression.</title>
        <authorList>
            <person name="Huttlin E.L."/>
            <person name="Jedrychowski M.P."/>
            <person name="Elias J.E."/>
            <person name="Goswami T."/>
            <person name="Rad R."/>
            <person name="Beausoleil S.A."/>
            <person name="Villen J."/>
            <person name="Haas W."/>
            <person name="Sowa M.E."/>
            <person name="Gygi S.P."/>
        </authorList>
    </citation>
    <scope>IDENTIFICATION BY MASS SPECTROMETRY [LARGE SCALE ANALYSIS]</scope>
    <source>
        <tissue>Brain</tissue>
        <tissue>Lung</tissue>
        <tissue>Spleen</tissue>
    </source>
</reference>
<reference key="10">
    <citation type="journal article" date="2011" name="Development">
        <title>Characterization of a Dchs1 mutant mouse reveals requirements for Dchs1-Fat4 signaling during mammalian development.</title>
        <authorList>
            <person name="Mao Y."/>
            <person name="Mulvaney J."/>
            <person name="Zakaria S."/>
            <person name="Yu T."/>
            <person name="Morgan K.M."/>
            <person name="Allen S."/>
            <person name="Basson M.A."/>
            <person name="Francis-West P."/>
            <person name="Irvine K.D."/>
        </authorList>
    </citation>
    <scope>DISRUPTION PHENOTYPE</scope>
</reference>
<reference key="11">
    <citation type="journal article" date="2013" name="Nat. Genet.">
        <title>Mutations in genes encoding the cadherin receptor-ligand pair DCHS1 and FAT4 disrupt cerebral cortical development.</title>
        <authorList>
            <person name="Cappello S."/>
            <person name="Gray M.J."/>
            <person name="Badouel C."/>
            <person name="Lange S."/>
            <person name="Einsiedler M."/>
            <person name="Srour M."/>
            <person name="Chitayat D."/>
            <person name="Hamdan F.F."/>
            <person name="Jenkins Z.A."/>
            <person name="Morgan T."/>
            <person name="Preitner N."/>
            <person name="Uster T."/>
            <person name="Thomas J."/>
            <person name="Shannon P."/>
            <person name="Morrison V."/>
            <person name="Di Donato N."/>
            <person name="Van Maldergem L."/>
            <person name="Neuhann T."/>
            <person name="Newbury-Ecob R."/>
            <person name="Swinkells M."/>
            <person name="Terhal P."/>
            <person name="Wilson L.C."/>
            <person name="Zwijnenburg P.J."/>
            <person name="Sutherland-Smith A.J."/>
            <person name="Black M.A."/>
            <person name="Markie D."/>
            <person name="Michaud J.L."/>
            <person name="Simpson M.A."/>
            <person name="Mansour S."/>
            <person name="McNeill H."/>
            <person name="Goetz M."/>
            <person name="Robertson S.P."/>
        </authorList>
    </citation>
    <scope>DISRUPTION PHENOTYPE</scope>
    <scope>DEVELOPMENTAL STAGE</scope>
    <scope>FUNCTION</scope>
</reference>
<proteinExistence type="evidence at protein level"/>
<organism>
    <name type="scientific">Mus musculus</name>
    <name type="common">Mouse</name>
    <dbReference type="NCBI Taxonomy" id="10090"/>
    <lineage>
        <taxon>Eukaryota</taxon>
        <taxon>Metazoa</taxon>
        <taxon>Chordata</taxon>
        <taxon>Craniata</taxon>
        <taxon>Vertebrata</taxon>
        <taxon>Euteleostomi</taxon>
        <taxon>Mammalia</taxon>
        <taxon>Eutheria</taxon>
        <taxon>Euarchontoglires</taxon>
        <taxon>Glires</taxon>
        <taxon>Rodentia</taxon>
        <taxon>Myomorpha</taxon>
        <taxon>Muroidea</taxon>
        <taxon>Muridae</taxon>
        <taxon>Murinae</taxon>
        <taxon>Mus</taxon>
        <taxon>Mus</taxon>
    </lineage>
</organism>
<evidence type="ECO:0000250" key="1"/>
<evidence type="ECO:0000255" key="2"/>
<evidence type="ECO:0000255" key="3">
    <source>
        <dbReference type="PROSITE-ProRule" id="PRU00043"/>
    </source>
</evidence>
<evidence type="ECO:0000255" key="4">
    <source>
        <dbReference type="PROSITE-ProRule" id="PRU00076"/>
    </source>
</evidence>
<evidence type="ECO:0000255" key="5">
    <source>
        <dbReference type="PROSITE-ProRule" id="PRU00122"/>
    </source>
</evidence>
<evidence type="ECO:0000256" key="6">
    <source>
        <dbReference type="SAM" id="MobiDB-lite"/>
    </source>
</evidence>
<evidence type="ECO:0000269" key="7">
    <source>
    </source>
</evidence>
<evidence type="ECO:0000269" key="8">
    <source>
    </source>
</evidence>
<evidence type="ECO:0000269" key="9">
    <source>
    </source>
</evidence>
<evidence type="ECO:0000269" key="10">
    <source>
    </source>
</evidence>
<evidence type="ECO:0000269" key="11">
    <source>
    </source>
</evidence>
<evidence type="ECO:0000303" key="12">
    <source>
    </source>
</evidence>
<evidence type="ECO:0000305" key="13"/>
<evidence type="ECO:0007744" key="14">
    <source>
    </source>
</evidence>
<sequence>MNLAANRAPGRRRLPLPSPSLCQLLRVWGLLSLLPGSARVQAAEQRQVFQVMEEQPPGTLVGTIPTRPGFTYRLSESHALFAINSSTGALYTTATIDRESLPSDVVNLVVLSSSPTYPTEVRVLVRDLNDNAPVFPDPSIVVTFKEDSGSGRQVILDTATDSDIGSNGVDHHSYRIVSGNEAGRFRLDITLNPSGEGAFLHLVSKGGLDREVTPQYQLLVEVEDKGEPKRRGYLQVNVTVQDINDNPPVFGSSHYQAGVPEDAVVGSSVLQVAAADADEGTNADIRYRLQDEGTPFQMDPETGLITVREPLDFEARRQYSLTVQATDRGVPSLTGRAEAFIQLLDVNDNDPVVKFRYFPATSRYASVDENAQVGTVVALLTVTDADSPAANGNISVQILGGNEQRHFEVQRSKVPNLSLIKVASALDRERIPSYNLTVSVSDNSGAPPTAEVQARSSVASLVIFVNDINDHPPVFEQQVYRVNLSEEVPPGSYVSGVSATDGDSGLNANLRYSIVSGNGLGWFHISEHSGLVTTSAAGGLDRELASQIVLNISARDQGVHPKVSYAQLVVTVLDVNDEKPVFSQPEGYEVSVVENAPTGTELLVLGATDRDLGDNGTVRFSLQEAENDQRLFRLDPVSGRLSTASSLDREEQAFYCLSILATDLGSPPQSSTAQVNVSLLDINDNSPVFYPVQYFAHIQENEPGGSYVTTVSATDPDMGPNGTVKYSISAGDRSRFQIHAKSGVISTKMALDREEKTAYQLQVVATDGGNLQSPNQAIVTVTVLDTQDNPPVFSQAAYSFVVFENVALGYHVGSVSATTMDLNANISYLITTGDQRGMFAMNPVTGQLTTASVIDREEQSFYQLKIVASGGAVTGDTVVNITVKDLNDNAPHFLQAVESINAVENWQAGHSIFQAKAVDPDEGVNGRVLYSLKQNPKNLFTINEQNGNISLLGALDVHAGSYQVEIVASDMGVPQLSSSILLTVYVHDVNDNPPVFDQISYEVTLSESEPVNSRFFKVQASDKDSGANGEIAYTITDGNNGDAFGIFPDGQLYIKSELDRELQDRYVLLVVASDRAVEPLSATVNVTVLLEDVNDNRPLFNSTNYTFYFEEEQRAGSFVGKVSAVDKDFGPNGEVRYAFEVTQPNFELHAVTGEITSTHKFDRESLMRRRGTAVFSFTVTAMDRGLPQPLKDQATVHVYMKDINDNAPKFLKDFYQATVSETATNLTQVLRVSASDVDEGSNGLIHYSILKGNEERQFAIDSFSGQVTLVGKLDYEATSAYSLLIQAVDSGAIPLNSTCTLSIDILDENDNTPSFPKSTLFVDVLENMRIGELVSSVTATDSDSGVNADLHYTITGSNNHGTFSISPNTGSIFLAKKLDFETQSLYKLNITAKDQGRPPRSSTMSVVIQVRDFNDNPPSFPPGDIFKSIVENIPLGTSVISVTAHDPDADINGQLSYAIIQQMPRGNHFSIDEVKGTIYTSAEIDREFANLFELTVKANDQAVPIETRRYALKNVTILVTDLNDNVPMFISQNALAADPSAMIGSVLTTIMAADPDEGANGEVEYEILNGDTDTFTVDRYSGDLRVASALVPSQLIYNLIVSATDLGPERRKSTTELTVILQGLDGPVFTQTKYITILKEGEPIGTNVISIEAASPRGSEAPVEYYIVSVRCEEKTVGRLFTIGRQTGVIQTAAILDREQGACLYLVDVYAIEKSSAFPRTQRAEVEITLQDINDNPPVFPTDTLDLTVEENIGDGSKIMQLTAMDADEGANALVTYALISGADDSFRIDPESGDLIATKRLDREHRSKYSLLVRADDGLQSSDMRINITISDVNDHTPRFSRPVYSFDIPEDTTPGSLVAAILATDDDSGVNGEISYVVEEDDGDGVFFLNLVTGVFNLTRALDYETQQYYILTVRAEDGGGQSTTIRAYFNILDVNDNPPVFSMSSYSTSLMENLPLGSTVLVFNVTDADDGVNSQLSYSIASGDSLGQFAVDKHGVLKTLKALDRESQSFYNLVIQVHDLPQPPTSRFTSTAQVSIILLDVNDNPPMFLSPKLTYIPENTPIDTVVFKAQATDPDSGPNSYIEYTLLNPSGNKFSIGTIDGEVHLTGELDREEVSNYSLTVVATDKGQPPLSSSTEVVVMVLDINDNNPVFAQAMYRVQIKENILTGTDIIQVSAADNDEGTNGQVRYGIVGGNTHQEFRIDSVTGAITVAKSLDRETTPAYTLTVQATDRGSSPRTDSCTVAITLLDMNDFVPVFELSPYSVNVPENLGTLPRAILQVVARDDDQGPNSQLSYVLLGGNEDNAFVLTASGELRVTQSLDREARDHFVLVVTAADAGSPALTGTGTINIIVDDINDNVPTFANNMYLTSIAEDARTGTDVLLVNASDADAAANAVISYSIIGGNSQFTINPSTGQIITSALLDRETKDNYTLVVVASDAGSPESLSSSTSVLVTITDVNDNPPRFQHHPYVTHIPSPTPPGSFVFAVTVTDADIGSNSELHYSLSGRNSEKFHIDPLRGAIMAAGPLSGASEVTFSVHVKDGGSFPKTDSTTVTVRFANKADFPKVRAKEQTFMFPENQPVGTLVTTITGSSLRGETLSYYIASGNLGDTFQIDPLTGQVSISQPLDFEKIQKYVVWIEARDGGFPPFSSYEKLDITVLDINDNAPTFEEDPFVSEILENLSPRKILTVSATDKDSGPNGQLDYEIVNGNQESSFTINHATGEIRSIRPLDREKISHYELTVKSSDKGSPSQSTSVKVIISILDENDNAPRFSQIFSAYVSENSPLGYTVTRVTTSDEDIGINAISRYSIVDTSLPFTINPNTGDIVISRPLNREDTDRYRIRVSAHDSGWTVSTDVTIFVTDINDNTPRFSRPSYYLDCPELPELGSRVTQVSATDPDEGSNGQVFYFIKSQSEYFRINATTGEIFNKQVLKYQNVSGFSNVNINRHSFIVTASDRGNPSLLSETTVTINTVDSNDNPPQFLQNKYFTPVTKNVKVGTKLIKVTAVDDKDFGLNSEVEYFVSDGNHLGKFKLDNDTGWISIASSLVSDLNQNFLIRVTAKDKGNPPLSSQAVVHITVTEENYHTPEFSQNHISATIPESHSIGSVVRTVSARDRDTAMNGLISYNIISGNEEGIFAINSSTGVVTLAKALDYEMSSKHEMTISATDGGWVARTGYCSLTVSVIDVNDNSPVFVPDEFFPTVMENAPSGTTVIHLNATDADSGANAVIAYTVQSSDSDLFVIDPNMGVITTQGFLDFETKQSYHLTVKAFNVPDEEKCSFATVDIQLKGTNEYVPRFVSKLYYFEVSEAASRGTAVGEVFASDRDMGADGEVHYLIFGNSRKKGFQINKMTGQIYVSGLLDREKEERVSLKVLAKNFGNIRGADIDEVTVNITVLDANDPPVFSLSTYRVQISEGVPIGTHVTFVSAFDSDSIPSWSRFSYFIGSGNENGAFSINPQTGQITVTSGLDRESLPVYNLTVLAVDSGTPSATGSASLVVTLEDINDNGPVLTVSEGEVLENKRPGTLVMTLQSTDPDLPPNQGPFNYYLLSTGPATNYFSLSTAGVLSTTREIDREQIADFYLSVVTRDSGAPQMSSTGTVHITVLDQNDNPSQSRTVEIFVNYYGNLFPGGTLGSVKPQDPDVLDSFHCSLTSGVTSLFSIPAGSCDLSSQPRSTDGTFDLTVVSSDGVHSTVTNNIRVFFAGFSNATIDNSILLRVGVPTVKDFLTNHYLHFLRIASSQLTGLGTAVQLYAAYEENNRTFLLAAVKRNNNQYVNPSGVATFFESIKEILLRQSGVKVESVDHDPCIHGPCQNGGSCLRRLAVGSALKIQESLPVIIVANEPLQPSQCKCVPGYAGSWCEVDIDECLPAPCHNGGTCHNLVGGFSCSCPEGFTGRACERDINECLPSPCKHGAVCQNFPGGFNCVCKTGYTGKMCESSVNYCECNPCFNGGSCQSGVESYYCHCPFGVFGKHCELNSYGFEELSYMEFPSLDPNNNYIYVKFATIKSHALLLYNYDNQTGERAEFLALEIAEERLRFSYNLGSGTYKLTTMKKVSDGQFHTVIARRAGMAASLTVDSCSENQEPGYCTVSNVAVSDDWTLDVQPNRVTVGGIRSLEPILQRRGHVESHDFVGCVMEFAVNGRPLEPSQALAAQGILDQCPRLEGTCARNPCQHGGTCVDFWSWQQCQCMEGLTGKYCEKSVTPDTALSLEGKGRLDYHMSQSEKREYLLTQSIRDTTLEPFGVNSLEVKFRTRSENGILIHIQESSNYTTVKIKNGKVHFTSDAGVAGKVERIIPEAYIADGHWHTFRISKNGSITVLSVDRIHNRDIVHPTQDFGGIEVLSMSLGGIPPNQAHRDTQTGFNGCIASVLYGGESLPFSGKHSLASISKTDPSVKIGCRGPNICASNPCWGDLLCINQWYAYKCVPPGDCASHPCQNGGSCEPGLLSGYTCSCPESHTGRTCETVVACLGVLCPQGKVCKAGSPGGHVCVQSQGPDEISLPLWAVPAIVGSCATALALLVLSLILCNQCRGKMPKNPKEEKKPKEKKKKGSENVAFDDPDNIPPYGDDLAVRKQPEGNPKPDIIERENPYLIFDETDIPHNSETIPSAPLASPEQEIEHYDIDNASSIAPSDADIIQHYKQFRSHTPKFSIQRHSPLGFARQSPMPLGASSLTYQPSSYGQGLRTSSLSHSACPTPNPLSRHSPAPFSKPSAFYRNSPARELHLPLRDGGTLEMHGDPCQPGMFNYATRLGRRSKSPQAMASHGSRPGSRLKQPIAQIPLESSPPVGLSIEEVERLNTPRPRNPSICSADHGRSSSEEDCRRPLSRTRNPADGIPAPESSSDSDSHDSFTCSEMEYDREKPVVYTSRMPKLSQVNESDADDEDNYGARLKPRRYHGRRAEGGPVGTPAAASGAADSTLKLGQQAGNFNWDNLLNWGPGFGHYVDVFKDLASLPEKAAGNEEGKSGAAKPAAKDGEAEQYV</sequence>
<accession>Q2PZL6</accession>
<accession>E9QMR9</accession>
<accession>Q68FE0</accession>
<accession>Q8BM82</accession>
<accession>Q8CD68</accession>